<dbReference type="EMBL" id="BC123430">
    <property type="protein sequence ID" value="AAI23431.1"/>
    <property type="molecule type" value="mRNA"/>
</dbReference>
<dbReference type="RefSeq" id="NP_001069920.1">
    <property type="nucleotide sequence ID" value="NM_001076452.1"/>
</dbReference>
<dbReference type="RefSeq" id="XP_005206461.1">
    <property type="nucleotide sequence ID" value="XM_005206404.5"/>
</dbReference>
<dbReference type="RefSeq" id="XP_005206463.1">
    <property type="nucleotide sequence ID" value="XM_005206406.5"/>
</dbReference>
<dbReference type="RefSeq" id="XP_059742728.1">
    <property type="nucleotide sequence ID" value="XM_059886745.1"/>
</dbReference>
<dbReference type="RefSeq" id="XP_059742729.1">
    <property type="nucleotide sequence ID" value="XM_059886746.1"/>
</dbReference>
<dbReference type="RefSeq" id="XP_059742730.1">
    <property type="nucleotide sequence ID" value="XM_059886747.1"/>
</dbReference>
<dbReference type="SMR" id="Q08E43"/>
<dbReference type="FunCoup" id="Q08E43">
    <property type="interactions" value="463"/>
</dbReference>
<dbReference type="STRING" id="9913.ENSBTAP00000059341"/>
<dbReference type="PaxDb" id="9913-ENSBTAP00000000361"/>
<dbReference type="Ensembl" id="ENSBTAT00000000361.5">
    <property type="protein sequence ID" value="ENSBTAP00000000361.3"/>
    <property type="gene ID" value="ENSBTAG00000000289.5"/>
</dbReference>
<dbReference type="GeneID" id="617269"/>
<dbReference type="KEGG" id="bta:617269"/>
<dbReference type="CTD" id="140461"/>
<dbReference type="VEuPathDB" id="HostDB:ENSBTAG00000000289"/>
<dbReference type="VGNC" id="VGNC:26201">
    <property type="gene designation" value="ASB8"/>
</dbReference>
<dbReference type="eggNOG" id="KOG0504">
    <property type="taxonomic scope" value="Eukaryota"/>
</dbReference>
<dbReference type="GeneTree" id="ENSGT00940000159366"/>
<dbReference type="HOGENOM" id="CLU_000134_52_0_1"/>
<dbReference type="InParanoid" id="Q08E43"/>
<dbReference type="OMA" id="NCMHGIL"/>
<dbReference type="OrthoDB" id="10258888at2759"/>
<dbReference type="TreeFam" id="TF332452"/>
<dbReference type="Reactome" id="R-BTA-8951664">
    <property type="pathway name" value="Neddylation"/>
</dbReference>
<dbReference type="Reactome" id="R-BTA-983168">
    <property type="pathway name" value="Antigen processing: Ubiquitination &amp; Proteasome degradation"/>
</dbReference>
<dbReference type="UniPathway" id="UPA00143"/>
<dbReference type="Proteomes" id="UP000009136">
    <property type="component" value="Chromosome 5"/>
</dbReference>
<dbReference type="Bgee" id="ENSBTAG00000000289">
    <property type="expression patterns" value="Expressed in semen and 104 other cell types or tissues"/>
</dbReference>
<dbReference type="GO" id="GO:0005737">
    <property type="term" value="C:cytoplasm"/>
    <property type="evidence" value="ECO:0007669"/>
    <property type="project" value="UniProtKB-SubCell"/>
</dbReference>
<dbReference type="GO" id="GO:0035556">
    <property type="term" value="P:intracellular signal transduction"/>
    <property type="evidence" value="ECO:0007669"/>
    <property type="project" value="InterPro"/>
</dbReference>
<dbReference type="GO" id="GO:0016567">
    <property type="term" value="P:protein ubiquitination"/>
    <property type="evidence" value="ECO:0007669"/>
    <property type="project" value="UniProtKB-UniPathway"/>
</dbReference>
<dbReference type="CDD" id="cd03727">
    <property type="entry name" value="SOCS_ASB8"/>
    <property type="match status" value="1"/>
</dbReference>
<dbReference type="FunFam" id="1.10.750.20:FF:000001">
    <property type="entry name" value="Ankyrin repeat and SOCS box containing 1"/>
    <property type="match status" value="1"/>
</dbReference>
<dbReference type="FunFam" id="1.25.40.20:FF:000274">
    <property type="entry name" value="Ankyrin repeat and SOCS box containing 8"/>
    <property type="match status" value="1"/>
</dbReference>
<dbReference type="FunFam" id="1.25.40.20:FF:000303">
    <property type="entry name" value="Ankyrin repeat and SOCS box containing 8"/>
    <property type="match status" value="1"/>
</dbReference>
<dbReference type="Gene3D" id="1.25.40.20">
    <property type="entry name" value="Ankyrin repeat-containing domain"/>
    <property type="match status" value="3"/>
</dbReference>
<dbReference type="Gene3D" id="1.10.750.20">
    <property type="entry name" value="SOCS box"/>
    <property type="match status" value="1"/>
</dbReference>
<dbReference type="InterPro" id="IPR002110">
    <property type="entry name" value="Ankyrin_rpt"/>
</dbReference>
<dbReference type="InterPro" id="IPR036770">
    <property type="entry name" value="Ankyrin_rpt-contain_sf"/>
</dbReference>
<dbReference type="InterPro" id="IPR037332">
    <property type="entry name" value="ASB8_SOCS"/>
</dbReference>
<dbReference type="InterPro" id="IPR001496">
    <property type="entry name" value="SOCS_box"/>
</dbReference>
<dbReference type="InterPro" id="IPR036036">
    <property type="entry name" value="SOCS_box-like_dom_sf"/>
</dbReference>
<dbReference type="PANTHER" id="PTHR24134:SF9">
    <property type="entry name" value="ANKYRIN REPEAT AND SOCS BOX PROTEIN 8"/>
    <property type="match status" value="1"/>
</dbReference>
<dbReference type="PANTHER" id="PTHR24134">
    <property type="entry name" value="ANKYRIN REPEAT-CONTAINING PROTEIN DDB_G0279043"/>
    <property type="match status" value="1"/>
</dbReference>
<dbReference type="Pfam" id="PF12796">
    <property type="entry name" value="Ank_2"/>
    <property type="match status" value="1"/>
</dbReference>
<dbReference type="Pfam" id="PF13637">
    <property type="entry name" value="Ank_4"/>
    <property type="match status" value="1"/>
</dbReference>
<dbReference type="Pfam" id="PF07525">
    <property type="entry name" value="SOCS_box"/>
    <property type="match status" value="1"/>
</dbReference>
<dbReference type="SMART" id="SM00248">
    <property type="entry name" value="ANK"/>
    <property type="match status" value="4"/>
</dbReference>
<dbReference type="SMART" id="SM00969">
    <property type="entry name" value="SOCS_box"/>
    <property type="match status" value="1"/>
</dbReference>
<dbReference type="SUPFAM" id="SSF48403">
    <property type="entry name" value="Ankyrin repeat"/>
    <property type="match status" value="1"/>
</dbReference>
<dbReference type="SUPFAM" id="SSF158235">
    <property type="entry name" value="SOCS box-like"/>
    <property type="match status" value="1"/>
</dbReference>
<dbReference type="PROSITE" id="PS50297">
    <property type="entry name" value="ANK_REP_REGION"/>
    <property type="match status" value="1"/>
</dbReference>
<dbReference type="PROSITE" id="PS50088">
    <property type="entry name" value="ANK_REPEAT"/>
    <property type="match status" value="4"/>
</dbReference>
<dbReference type="PROSITE" id="PS50225">
    <property type="entry name" value="SOCS"/>
    <property type="match status" value="1"/>
</dbReference>
<name>ASB8_BOVIN</name>
<feature type="chain" id="PRO_0000283058" description="Ankyrin repeat and SOCS box protein 8">
    <location>
        <begin position="1"/>
        <end position="288"/>
    </location>
</feature>
<feature type="repeat" description="ANK 1">
    <location>
        <begin position="52"/>
        <end position="81"/>
    </location>
</feature>
<feature type="repeat" description="ANK 2">
    <location>
        <begin position="85"/>
        <end position="113"/>
    </location>
</feature>
<feature type="repeat" description="ANK 3">
    <location>
        <begin position="117"/>
        <end position="146"/>
    </location>
</feature>
<feature type="repeat" description="ANK 4">
    <location>
        <begin position="150"/>
        <end position="179"/>
    </location>
</feature>
<feature type="domain" description="SOCS box" evidence="3">
    <location>
        <begin position="235"/>
        <end position="288"/>
    </location>
</feature>
<feature type="modified residue" description="Phosphoserine" evidence="2">
    <location>
        <position position="17"/>
    </location>
</feature>
<protein>
    <recommendedName>
        <fullName>Ankyrin repeat and SOCS box protein 8</fullName>
        <shortName>ASB-8</shortName>
    </recommendedName>
</protein>
<reference key="1">
    <citation type="submission" date="2006-09" db="EMBL/GenBank/DDBJ databases">
        <authorList>
            <consortium name="NIH - Mammalian Gene Collection (MGC) project"/>
        </authorList>
    </citation>
    <scope>NUCLEOTIDE SEQUENCE [LARGE SCALE MRNA]</scope>
    <source>
        <strain>Hereford</strain>
        <tissue>Thalamus</tissue>
    </source>
</reference>
<comment type="function">
    <text evidence="2">May be a substrate-recognition component of a SCF-like ECS (Elongin-Cullin-SOCS-box protein) E3 ubiquitin-protein ligase complex which mediates the ubiquitination and subsequent proteasomal degradation of target proteins. Inhibits IFN-beta production through the IRF3 signaling pathway by targeting TBK1 via 'Lys-48'-linked ubiquitination, leading to its proteasomal degradation.</text>
</comment>
<comment type="pathway">
    <text>Protein modification; protein ubiquitination.</text>
</comment>
<comment type="subunit">
    <text evidence="2">Interacts with TBK1; this interaction promotes TBK1 proteasomal degradation.</text>
</comment>
<comment type="subcellular location">
    <subcellularLocation>
        <location evidence="2">Cytoplasm</location>
    </subcellularLocation>
</comment>
<comment type="domain">
    <text evidence="1">The SOCS box domain mediates the interaction with the Elongin BC complex, an adapter module in different E3 ubiquitin-protein ligase complexes.</text>
</comment>
<comment type="PTM">
    <text evidence="2">Phosphorylated by TBK1.</text>
</comment>
<comment type="similarity">
    <text evidence="4">Belongs to the ankyrin SOCS box (ASB) family.</text>
</comment>
<evidence type="ECO:0000250" key="1"/>
<evidence type="ECO:0000250" key="2">
    <source>
        <dbReference type="UniProtKB" id="Q9H765"/>
    </source>
</evidence>
<evidence type="ECO:0000255" key="3">
    <source>
        <dbReference type="PROSITE-ProRule" id="PRU00194"/>
    </source>
</evidence>
<evidence type="ECO:0000305" key="4"/>
<organism>
    <name type="scientific">Bos taurus</name>
    <name type="common">Bovine</name>
    <dbReference type="NCBI Taxonomy" id="9913"/>
    <lineage>
        <taxon>Eukaryota</taxon>
        <taxon>Metazoa</taxon>
        <taxon>Chordata</taxon>
        <taxon>Craniata</taxon>
        <taxon>Vertebrata</taxon>
        <taxon>Euteleostomi</taxon>
        <taxon>Mammalia</taxon>
        <taxon>Eutheria</taxon>
        <taxon>Laurasiatheria</taxon>
        <taxon>Artiodactyla</taxon>
        <taxon>Ruminantia</taxon>
        <taxon>Pecora</taxon>
        <taxon>Bovidae</taxon>
        <taxon>Bovinae</taxon>
        <taxon>Bos</taxon>
    </lineage>
</organism>
<proteinExistence type="evidence at transcript level"/>
<gene>
    <name type="primary">ASB8</name>
</gene>
<sequence length="288" mass="31676">MSSSMWYIMQSIQSKYSLSERLIRTIAAIRSFPHDNVEDLIRGGADVNCTHGTLKPLHCACMVSDADCVELLLEKGAEVNALDGYNRTALHYAAEKDEACVEVLLEYGANPNALDGNRDTPLHWAAFKNNAECVRALLESGASVNALDYNNDTPLSWAAMKGNLESVSILLDYGAEVRVINLKGQTPISRLVALLVRGLGTEKEDSCFELLHRAVGHFELRKNGTMPREVAKDQQLCEKLTVLCSAPGTLKTLSRYAVRRSLGLQYLPDAVKGLPLPASLKEYLLLIE</sequence>
<accession>Q08E43</accession>
<keyword id="KW-0040">ANK repeat</keyword>
<keyword id="KW-0963">Cytoplasm</keyword>
<keyword id="KW-0597">Phosphoprotein</keyword>
<keyword id="KW-1185">Reference proteome</keyword>
<keyword id="KW-0677">Repeat</keyword>
<keyword id="KW-0833">Ubl conjugation pathway</keyword>